<gene>
    <name evidence="1" type="primary">rplU</name>
    <name type="ordered locus">TT_C1424</name>
</gene>
<keyword id="KW-0002">3D-structure</keyword>
<keyword id="KW-0687">Ribonucleoprotein</keyword>
<keyword id="KW-0689">Ribosomal protein</keyword>
<keyword id="KW-0694">RNA-binding</keyword>
<keyword id="KW-0699">rRNA-binding</keyword>
<reference key="1">
    <citation type="journal article" date="2004" name="Nat. Biotechnol.">
        <title>The genome sequence of the extreme thermophile Thermus thermophilus.</title>
        <authorList>
            <person name="Henne A."/>
            <person name="Brueggemann H."/>
            <person name="Raasch C."/>
            <person name="Wiezer A."/>
            <person name="Hartsch T."/>
            <person name="Liesegang H."/>
            <person name="Johann A."/>
            <person name="Lienard T."/>
            <person name="Gohl O."/>
            <person name="Martinez-Arias R."/>
            <person name="Jacobi C."/>
            <person name="Starkuviene V."/>
            <person name="Schlenczeck S."/>
            <person name="Dencker S."/>
            <person name="Huber R."/>
            <person name="Klenk H.-P."/>
            <person name="Kramer W."/>
            <person name="Merkl R."/>
            <person name="Gottschalk G."/>
            <person name="Fritz H.-J."/>
        </authorList>
    </citation>
    <scope>NUCLEOTIDE SEQUENCE [LARGE SCALE GENOMIC DNA]</scope>
    <source>
        <strain>ATCC BAA-163 / DSM 7039 / HB27</strain>
    </source>
</reference>
<name>RL21_THET2</name>
<sequence>MFAIVKTGGKQYRVEPGLKLRVEKLDAEPGATVELPVLLLGGEKTVVGTPVVEGASVVAEVLGHGRGKKILVSKFKAKVQYRRKKGHRQPYTELLIKEIRG</sequence>
<proteinExistence type="evidence at protein level"/>
<organism>
    <name type="scientific">Thermus thermophilus (strain ATCC BAA-163 / DSM 7039 / HB27)</name>
    <dbReference type="NCBI Taxonomy" id="262724"/>
    <lineage>
        <taxon>Bacteria</taxon>
        <taxon>Thermotogati</taxon>
        <taxon>Deinococcota</taxon>
        <taxon>Deinococci</taxon>
        <taxon>Thermales</taxon>
        <taxon>Thermaceae</taxon>
        <taxon>Thermus</taxon>
    </lineage>
</organism>
<evidence type="ECO:0000255" key="1">
    <source>
        <dbReference type="HAMAP-Rule" id="MF_01363"/>
    </source>
</evidence>
<evidence type="ECO:0000305" key="2"/>
<evidence type="ECO:0007829" key="3">
    <source>
        <dbReference type="PDB" id="4V67"/>
    </source>
</evidence>
<evidence type="ECO:0007829" key="4">
    <source>
        <dbReference type="PDB" id="4V9K"/>
    </source>
</evidence>
<evidence type="ECO:0007829" key="5">
    <source>
        <dbReference type="PDB" id="4V9L"/>
    </source>
</evidence>
<dbReference type="EMBL" id="AE017221">
    <property type="protein sequence ID" value="AAS81766.1"/>
    <property type="molecule type" value="Genomic_DNA"/>
</dbReference>
<dbReference type="RefSeq" id="WP_008633581.1">
    <property type="nucleotide sequence ID" value="NC_005835.1"/>
</dbReference>
<dbReference type="PDB" id="4V4I">
    <property type="method" value="X-ray"/>
    <property type="resolution" value="3.71 A"/>
    <property type="chains" value="P=1-101"/>
</dbReference>
<dbReference type="PDB" id="4V4J">
    <property type="method" value="X-ray"/>
    <property type="resolution" value="3.83 A"/>
    <property type="chains" value="P=1-101"/>
</dbReference>
<dbReference type="PDB" id="4V63">
    <property type="method" value="X-ray"/>
    <property type="resolution" value="3.21 A"/>
    <property type="chains" value="BV/DV=1-101"/>
</dbReference>
<dbReference type="PDB" id="4V67">
    <property type="method" value="X-ray"/>
    <property type="resolution" value="3.00 A"/>
    <property type="chains" value="BV/DV=1-101"/>
</dbReference>
<dbReference type="PDB" id="4V7P">
    <property type="method" value="X-ray"/>
    <property type="resolution" value="3.62 A"/>
    <property type="chains" value="BR/CR=1-101"/>
</dbReference>
<dbReference type="PDB" id="4V83">
    <property type="method" value="X-ray"/>
    <property type="resolution" value="3.50 A"/>
    <property type="chains" value="BR/DR=1-101"/>
</dbReference>
<dbReference type="PDB" id="4V84">
    <property type="method" value="X-ray"/>
    <property type="resolution" value="3.40 A"/>
    <property type="chains" value="BR/DR=1-101"/>
</dbReference>
<dbReference type="PDB" id="4V9J">
    <property type="method" value="X-ray"/>
    <property type="resolution" value="3.86 A"/>
    <property type="chains" value="BV/DV=1-101"/>
</dbReference>
<dbReference type="PDB" id="4V9K">
    <property type="method" value="X-ray"/>
    <property type="resolution" value="3.50 A"/>
    <property type="chains" value="BV/DV=1-101"/>
</dbReference>
<dbReference type="PDB" id="4V9L">
    <property type="method" value="X-ray"/>
    <property type="resolution" value="3.50 A"/>
    <property type="chains" value="BV/DV=1-101"/>
</dbReference>
<dbReference type="PDB" id="4V9M">
    <property type="method" value="X-ray"/>
    <property type="resolution" value="4.00 A"/>
    <property type="chains" value="BV/DV=1-101"/>
</dbReference>
<dbReference type="PDB" id="4V9N">
    <property type="method" value="X-ray"/>
    <property type="resolution" value="3.40 A"/>
    <property type="chains" value="BV/DV=1-101"/>
</dbReference>
<dbReference type="PDB" id="4V9Q">
    <property type="method" value="X-ray"/>
    <property type="resolution" value="3.40 A"/>
    <property type="chains" value="AR/CR=1-101"/>
</dbReference>
<dbReference type="PDB" id="4W29">
    <property type="method" value="X-ray"/>
    <property type="resolution" value="3.80 A"/>
    <property type="chains" value="BV/DV=1-101"/>
</dbReference>
<dbReference type="PDB" id="4XEJ">
    <property type="method" value="X-ray"/>
    <property type="resolution" value="3.80 A"/>
    <property type="chains" value="AL21/BL21=1-101"/>
</dbReference>
<dbReference type="PDB" id="5J4D">
    <property type="method" value="X-ray"/>
    <property type="resolution" value="3.10 A"/>
    <property type="chains" value="S/XB=1-101"/>
</dbReference>
<dbReference type="PDB" id="5V8I">
    <property type="method" value="X-ray"/>
    <property type="resolution" value="3.25 A"/>
    <property type="chains" value="1V/2V=1-101"/>
</dbReference>
<dbReference type="PDB" id="6B4V">
    <property type="method" value="X-ray"/>
    <property type="resolution" value="3.40 A"/>
    <property type="chains" value="S/WB=1-101"/>
</dbReference>
<dbReference type="PDB" id="6BOH">
    <property type="method" value="X-ray"/>
    <property type="resolution" value="3.40 A"/>
    <property type="chains" value="S/XB=1-101"/>
</dbReference>
<dbReference type="PDB" id="6BOK">
    <property type="method" value="X-ray"/>
    <property type="resolution" value="3.55 A"/>
    <property type="chains" value="S/VB=1-101"/>
</dbReference>
<dbReference type="PDB" id="6N1D">
    <property type="method" value="X-ray"/>
    <property type="resolution" value="3.20 A"/>
    <property type="chains" value="AL21/BL21=1-101"/>
</dbReference>
<dbReference type="PDBsum" id="4V4I"/>
<dbReference type="PDBsum" id="4V4J"/>
<dbReference type="PDBsum" id="4V63"/>
<dbReference type="PDBsum" id="4V67"/>
<dbReference type="PDBsum" id="4V7P"/>
<dbReference type="PDBsum" id="4V83"/>
<dbReference type="PDBsum" id="4V84"/>
<dbReference type="PDBsum" id="4V9J"/>
<dbReference type="PDBsum" id="4V9K"/>
<dbReference type="PDBsum" id="4V9L"/>
<dbReference type="PDBsum" id="4V9M"/>
<dbReference type="PDBsum" id="4V9N"/>
<dbReference type="PDBsum" id="4V9Q"/>
<dbReference type="PDBsum" id="4W29"/>
<dbReference type="PDBsum" id="4XEJ"/>
<dbReference type="PDBsum" id="5J4D"/>
<dbReference type="PDBsum" id="5V8I"/>
<dbReference type="PDBsum" id="6B4V"/>
<dbReference type="PDBsum" id="6BOH"/>
<dbReference type="PDBsum" id="6BOK"/>
<dbReference type="PDBsum" id="6N1D"/>
<dbReference type="SMR" id="Q72HR2"/>
<dbReference type="IntAct" id="Q72HR2">
    <property type="interactions" value="4"/>
</dbReference>
<dbReference type="GeneID" id="3169471"/>
<dbReference type="KEGG" id="tth:TT_C1424"/>
<dbReference type="eggNOG" id="COG0261">
    <property type="taxonomic scope" value="Bacteria"/>
</dbReference>
<dbReference type="HOGENOM" id="CLU_061463_3_2_0"/>
<dbReference type="OrthoDB" id="9813334at2"/>
<dbReference type="Proteomes" id="UP000000592">
    <property type="component" value="Chromosome"/>
</dbReference>
<dbReference type="GO" id="GO:0005737">
    <property type="term" value="C:cytoplasm"/>
    <property type="evidence" value="ECO:0007669"/>
    <property type="project" value="UniProtKB-ARBA"/>
</dbReference>
<dbReference type="GO" id="GO:1990904">
    <property type="term" value="C:ribonucleoprotein complex"/>
    <property type="evidence" value="ECO:0007669"/>
    <property type="project" value="UniProtKB-KW"/>
</dbReference>
<dbReference type="GO" id="GO:0005840">
    <property type="term" value="C:ribosome"/>
    <property type="evidence" value="ECO:0007669"/>
    <property type="project" value="UniProtKB-KW"/>
</dbReference>
<dbReference type="GO" id="GO:0019843">
    <property type="term" value="F:rRNA binding"/>
    <property type="evidence" value="ECO:0007669"/>
    <property type="project" value="UniProtKB-UniRule"/>
</dbReference>
<dbReference type="GO" id="GO:0003735">
    <property type="term" value="F:structural constituent of ribosome"/>
    <property type="evidence" value="ECO:0007669"/>
    <property type="project" value="InterPro"/>
</dbReference>
<dbReference type="GO" id="GO:0006412">
    <property type="term" value="P:translation"/>
    <property type="evidence" value="ECO:0007669"/>
    <property type="project" value="UniProtKB-UniRule"/>
</dbReference>
<dbReference type="HAMAP" id="MF_01363">
    <property type="entry name" value="Ribosomal_bL21"/>
    <property type="match status" value="1"/>
</dbReference>
<dbReference type="InterPro" id="IPR028909">
    <property type="entry name" value="bL21-like"/>
</dbReference>
<dbReference type="InterPro" id="IPR036164">
    <property type="entry name" value="bL21-like_sf"/>
</dbReference>
<dbReference type="InterPro" id="IPR001787">
    <property type="entry name" value="Ribosomal_bL21"/>
</dbReference>
<dbReference type="NCBIfam" id="TIGR00061">
    <property type="entry name" value="L21"/>
    <property type="match status" value="1"/>
</dbReference>
<dbReference type="PANTHER" id="PTHR21349">
    <property type="entry name" value="50S RIBOSOMAL PROTEIN L21"/>
    <property type="match status" value="1"/>
</dbReference>
<dbReference type="PANTHER" id="PTHR21349:SF0">
    <property type="entry name" value="LARGE RIBOSOMAL SUBUNIT PROTEIN BL21M"/>
    <property type="match status" value="1"/>
</dbReference>
<dbReference type="Pfam" id="PF00829">
    <property type="entry name" value="Ribosomal_L21p"/>
    <property type="match status" value="1"/>
</dbReference>
<dbReference type="SUPFAM" id="SSF141091">
    <property type="entry name" value="L21p-like"/>
    <property type="match status" value="1"/>
</dbReference>
<accession>Q72HR2</accession>
<protein>
    <recommendedName>
        <fullName evidence="1">Large ribosomal subunit protein bL21</fullName>
    </recommendedName>
    <alternativeName>
        <fullName evidence="2">50S ribosomal protein L21</fullName>
    </alternativeName>
</protein>
<feature type="chain" id="PRO_0000269415" description="Large ribosomal subunit protein bL21">
    <location>
        <begin position="1"/>
        <end position="101"/>
    </location>
</feature>
<feature type="strand" evidence="3">
    <location>
        <begin position="4"/>
        <end position="7"/>
    </location>
</feature>
<feature type="strand" evidence="3">
    <location>
        <begin position="10"/>
        <end position="13"/>
    </location>
</feature>
<feature type="strand" evidence="3">
    <location>
        <begin position="19"/>
        <end position="23"/>
    </location>
</feature>
<feature type="strand" evidence="3">
    <location>
        <begin position="32"/>
        <end position="34"/>
    </location>
</feature>
<feature type="strand" evidence="4">
    <location>
        <begin position="42"/>
        <end position="44"/>
    </location>
</feature>
<feature type="strand" evidence="3">
    <location>
        <begin position="48"/>
        <end position="51"/>
    </location>
</feature>
<feature type="strand" evidence="5">
    <location>
        <begin position="53"/>
        <end position="55"/>
    </location>
</feature>
<feature type="strand" evidence="3">
    <location>
        <begin position="58"/>
        <end position="65"/>
    </location>
</feature>
<feature type="strand" evidence="3">
    <location>
        <begin position="70"/>
        <end position="76"/>
    </location>
</feature>
<feature type="turn" evidence="3">
    <location>
        <begin position="77"/>
        <end position="80"/>
    </location>
</feature>
<feature type="strand" evidence="3">
    <location>
        <begin position="81"/>
        <end position="87"/>
    </location>
</feature>
<feature type="strand" evidence="3">
    <location>
        <begin position="91"/>
        <end position="96"/>
    </location>
</feature>
<feature type="strand" evidence="4">
    <location>
        <begin position="98"/>
        <end position="100"/>
    </location>
</feature>
<comment type="function">
    <text evidence="1">This protein binds to 23S rRNA in the presence of protein L20.</text>
</comment>
<comment type="subunit">
    <text evidence="1">Part of the 50S ribosomal subunit. Contacts protein L20.</text>
</comment>
<comment type="similarity">
    <text evidence="1">Belongs to the bacterial ribosomal protein bL21 family.</text>
</comment>